<proteinExistence type="evidence at transcript level"/>
<protein>
    <recommendedName>
        <fullName>Mothers against decapentaplegic homolog 6</fullName>
        <shortName>MAD homolog 6</shortName>
        <shortName>Mothers against DPP homolog 6</shortName>
    </recommendedName>
    <alternativeName>
        <fullName>SMAD family member 6</fullName>
        <shortName>SMAD 6</shortName>
        <shortName>Smad6</shortName>
    </alternativeName>
</protein>
<name>SMAD6_CHICK</name>
<gene>
    <name type="primary">SMAD6</name>
    <name type="synonym">MADH6</name>
</gene>
<feature type="chain" id="PRO_0000090871" description="Mothers against decapentaplegic homolog 6">
    <location>
        <begin position="1"/>
        <end position="431"/>
    </location>
</feature>
<feature type="domain" description="MH1" evidence="3">
    <location>
        <begin position="85"/>
        <end position="209"/>
    </location>
</feature>
<feature type="domain" description="MH2" evidence="4">
    <location>
        <begin position="265"/>
        <end position="431"/>
    </location>
</feature>
<feature type="region of interest" description="Disordered" evidence="5">
    <location>
        <begin position="1"/>
        <end position="95"/>
    </location>
</feature>
<feature type="region of interest" description="Disordered" evidence="5">
    <location>
        <begin position="235"/>
        <end position="258"/>
    </location>
</feature>
<feature type="compositionally biased region" description="Basic residues" evidence="5">
    <location>
        <begin position="1"/>
        <end position="15"/>
    </location>
</feature>
<feature type="compositionally biased region" description="Polar residues" evidence="5">
    <location>
        <begin position="29"/>
        <end position="38"/>
    </location>
</feature>
<feature type="compositionally biased region" description="Pro residues" evidence="5">
    <location>
        <begin position="71"/>
        <end position="90"/>
    </location>
</feature>
<feature type="compositionally biased region" description="Polar residues" evidence="5">
    <location>
        <begin position="235"/>
        <end position="245"/>
    </location>
</feature>
<feature type="binding site" evidence="1">
    <location>
        <position position="139"/>
    </location>
    <ligand>
        <name>Zn(2+)</name>
        <dbReference type="ChEBI" id="CHEBI:29105"/>
    </ligand>
</feature>
<feature type="binding site" evidence="1">
    <location>
        <position position="182"/>
    </location>
    <ligand>
        <name>Zn(2+)</name>
        <dbReference type="ChEBI" id="CHEBI:29105"/>
    </ligand>
</feature>
<feature type="binding site" evidence="1">
    <location>
        <position position="194"/>
    </location>
    <ligand>
        <name>Zn(2+)</name>
        <dbReference type="ChEBI" id="CHEBI:29105"/>
    </ligand>
</feature>
<feature type="binding site" evidence="1">
    <location>
        <position position="199"/>
    </location>
    <ligand>
        <name>Zn(2+)</name>
        <dbReference type="ChEBI" id="CHEBI:29105"/>
    </ligand>
</feature>
<accession>Q9W734</accession>
<sequence length="431" mass="47824">MFRSKRSGLVRRLWRSRVIPERDGGDGNGQSSERNATAVTAEGQRMAQPRRAQEGEGRPVRCCLFAERPGPELPPPPPPPPPGGASPPGPGGGEARSRLVLLERELKAVTYALLKRLKERSLHSLLQAVESRGGTPGGCVLVARGELRLGAARRPPPHLLLGKLFRWPDLQHPAELKALCECQSFGAADGPTVCCNPYHFSRLCGPESPPPPYSRLSPNDEQKPLDLSDSTLSYTETEATNSPNVTPGEFSDASTSPDAVKRSHWCNVAYWEHRTRVGRLYTVYEQSVSIFYDLPQGNGFCLGQLNLENRSETVRRTRSKIGYGILLSKEPDGVWAYNRSEHPIFVNSPTLDIPNCRTLIVRKVMPGYSIKVFDYEKSCLLQHTAELDYADGPYDPNSVRISFAKGWGPCYSRQFITSCPCWLEILLSNNR</sequence>
<comment type="function">
    <text evidence="2">Transforming growth factor-beta superfamily receptors signaling occurs through the Smad family of intracellular mediators. SMAD6 is an inhibitory Smad (i-Smad) that negatively regulates signaling downstream of type I transforming growth factor-beta. Acts as a mediator of TGF-beta and BMP anti-inflammatory activities. Suppresses IL1R-TLR signaling through its direct interaction with PEL1, preventing NF-kappa-B activation, nuclear transport and NF-kappa-B-mediated expression of pro-inflammatory genes. Blocks the BMP-SMAD1 signaling pathway by competing with SMAD4 for receptor-activated SMAD1-binding. Binds to regulatory elements in target promoter regions.</text>
</comment>
<comment type="subcellular location">
    <subcellularLocation>
        <location evidence="1">Nucleus</location>
    </subcellularLocation>
</comment>
<comment type="tissue specificity">
    <text>Developing heart, eyes and limbs.</text>
</comment>
<comment type="similarity">
    <text evidence="6">Belongs to the dwarfin/SMAD family.</text>
</comment>
<reference key="1">
    <citation type="journal article" date="1999" name="Dev. Biol.">
        <title>Evidence for a role of Smad6 in chick cardiac development.</title>
        <authorList>
            <person name="Yamada M."/>
            <person name="Szendro P.I."/>
            <person name="Prokscha A."/>
            <person name="Schwartz R.J."/>
            <person name="Eichele G."/>
        </authorList>
    </citation>
    <scope>NUCLEOTIDE SEQUENCE [MRNA]</scope>
</reference>
<evidence type="ECO:0000250" key="1"/>
<evidence type="ECO:0000250" key="2">
    <source>
        <dbReference type="UniProtKB" id="O43541"/>
    </source>
</evidence>
<evidence type="ECO:0000255" key="3">
    <source>
        <dbReference type="PROSITE-ProRule" id="PRU00438"/>
    </source>
</evidence>
<evidence type="ECO:0000255" key="4">
    <source>
        <dbReference type="PROSITE-ProRule" id="PRU00439"/>
    </source>
</evidence>
<evidence type="ECO:0000256" key="5">
    <source>
        <dbReference type="SAM" id="MobiDB-lite"/>
    </source>
</evidence>
<evidence type="ECO:0000305" key="6"/>
<keyword id="KW-0479">Metal-binding</keyword>
<keyword id="KW-0539">Nucleus</keyword>
<keyword id="KW-1185">Reference proteome</keyword>
<keyword id="KW-0804">Transcription</keyword>
<keyword id="KW-0805">Transcription regulation</keyword>
<keyword id="KW-0862">Zinc</keyword>
<dbReference type="EMBL" id="AF165889">
    <property type="protein sequence ID" value="AAD45160.1"/>
    <property type="molecule type" value="mRNA"/>
</dbReference>
<dbReference type="SMR" id="Q9W734"/>
<dbReference type="FunCoup" id="Q9W734">
    <property type="interactions" value="708"/>
</dbReference>
<dbReference type="STRING" id="9031.ENSGALP00000049933"/>
<dbReference type="GlyGen" id="Q9W734">
    <property type="glycosylation" value="2 sites"/>
</dbReference>
<dbReference type="PaxDb" id="9031-ENSGALP00000041470"/>
<dbReference type="VEuPathDB" id="HostDB:geneid_374096"/>
<dbReference type="eggNOG" id="KOG3701">
    <property type="taxonomic scope" value="Eukaryota"/>
</dbReference>
<dbReference type="HOGENOM" id="CLU_026736_2_0_1"/>
<dbReference type="InParanoid" id="Q9W734"/>
<dbReference type="OrthoDB" id="5946219at2759"/>
<dbReference type="PhylomeDB" id="Q9W734"/>
<dbReference type="PRO" id="PR:Q9W734"/>
<dbReference type="Proteomes" id="UP000000539">
    <property type="component" value="Unassembled WGS sequence"/>
</dbReference>
<dbReference type="GO" id="GO:0005768">
    <property type="term" value="C:endosome"/>
    <property type="evidence" value="ECO:0000314"/>
    <property type="project" value="AgBase"/>
</dbReference>
<dbReference type="GO" id="GO:0071144">
    <property type="term" value="C:heteromeric SMAD protein complex"/>
    <property type="evidence" value="ECO:0000318"/>
    <property type="project" value="GO_Central"/>
</dbReference>
<dbReference type="GO" id="GO:0005634">
    <property type="term" value="C:nucleus"/>
    <property type="evidence" value="ECO:0000314"/>
    <property type="project" value="AgBase"/>
</dbReference>
<dbReference type="GO" id="GO:0003682">
    <property type="term" value="F:chromatin binding"/>
    <property type="evidence" value="ECO:0000250"/>
    <property type="project" value="UniProtKB"/>
</dbReference>
<dbReference type="GO" id="GO:0070411">
    <property type="term" value="F:I-SMAD binding"/>
    <property type="evidence" value="ECO:0000318"/>
    <property type="project" value="GO_Central"/>
</dbReference>
<dbReference type="GO" id="GO:0046872">
    <property type="term" value="F:metal ion binding"/>
    <property type="evidence" value="ECO:0007669"/>
    <property type="project" value="UniProtKB-KW"/>
</dbReference>
<dbReference type="GO" id="GO:0000976">
    <property type="term" value="F:transcription cis-regulatory region binding"/>
    <property type="evidence" value="ECO:0000250"/>
    <property type="project" value="UniProtKB"/>
</dbReference>
<dbReference type="GO" id="GO:0140416">
    <property type="term" value="F:transcription regulator inhibitor activity"/>
    <property type="evidence" value="ECO:0000318"/>
    <property type="project" value="GO_Central"/>
</dbReference>
<dbReference type="GO" id="GO:0009653">
    <property type="term" value="P:anatomical structure morphogenesis"/>
    <property type="evidence" value="ECO:0000318"/>
    <property type="project" value="GO_Central"/>
</dbReference>
<dbReference type="GO" id="GO:0030509">
    <property type="term" value="P:BMP signaling pathway"/>
    <property type="evidence" value="ECO:0000318"/>
    <property type="project" value="GO_Central"/>
</dbReference>
<dbReference type="GO" id="GO:0030154">
    <property type="term" value="P:cell differentiation"/>
    <property type="evidence" value="ECO:0000318"/>
    <property type="project" value="GO_Central"/>
</dbReference>
<dbReference type="GO" id="GO:0031589">
    <property type="term" value="P:cell-substrate adhesion"/>
    <property type="evidence" value="ECO:0000250"/>
    <property type="project" value="UniProtKB"/>
</dbReference>
<dbReference type="GO" id="GO:0010693">
    <property type="term" value="P:negative regulation of alkaline phosphatase activity"/>
    <property type="evidence" value="ECO:0000315"/>
    <property type="project" value="AgBase"/>
</dbReference>
<dbReference type="GO" id="GO:0030514">
    <property type="term" value="P:negative regulation of BMP signaling pathway"/>
    <property type="evidence" value="ECO:0000315"/>
    <property type="project" value="AgBase"/>
</dbReference>
<dbReference type="GO" id="GO:0090090">
    <property type="term" value="P:negative regulation of canonical Wnt signaling pathway"/>
    <property type="evidence" value="ECO:0000315"/>
    <property type="project" value="AgBase"/>
</dbReference>
<dbReference type="GO" id="GO:1902832">
    <property type="term" value="P:negative regulation of cell proliferation in dorsal spinal cord"/>
    <property type="evidence" value="ECO:0000315"/>
    <property type="project" value="AgBase"/>
</dbReference>
<dbReference type="GO" id="GO:0032331">
    <property type="term" value="P:negative regulation of chondrocyte differentiation"/>
    <property type="evidence" value="ECO:0000315"/>
    <property type="project" value="AgBase"/>
</dbReference>
<dbReference type="GO" id="GO:0050767">
    <property type="term" value="P:regulation of neurogenesis"/>
    <property type="evidence" value="ECO:0000315"/>
    <property type="project" value="AgBase"/>
</dbReference>
<dbReference type="GO" id="GO:0006357">
    <property type="term" value="P:regulation of transcription by RNA polymerase II"/>
    <property type="evidence" value="ECO:0000318"/>
    <property type="project" value="GO_Central"/>
</dbReference>
<dbReference type="GO" id="GO:0060395">
    <property type="term" value="P:SMAD protein signal transduction"/>
    <property type="evidence" value="ECO:0000318"/>
    <property type="project" value="GO_Central"/>
</dbReference>
<dbReference type="CDD" id="cd10493">
    <property type="entry name" value="MH1_SMAD_6"/>
    <property type="match status" value="1"/>
</dbReference>
<dbReference type="CDD" id="cd10499">
    <property type="entry name" value="MH2_SMAD_6"/>
    <property type="match status" value="1"/>
</dbReference>
<dbReference type="FunFam" id="2.60.200.10:FF:000004">
    <property type="entry name" value="Mothers against decapentaplegic homolog"/>
    <property type="match status" value="1"/>
</dbReference>
<dbReference type="FunFam" id="3.90.520.10:FF:000003">
    <property type="entry name" value="Mothers against decapentaplegic homolog"/>
    <property type="match status" value="1"/>
</dbReference>
<dbReference type="Gene3D" id="2.60.200.10">
    <property type="match status" value="1"/>
</dbReference>
<dbReference type="Gene3D" id="3.90.520.10">
    <property type="entry name" value="SMAD MH1 domain"/>
    <property type="match status" value="1"/>
</dbReference>
<dbReference type="InterPro" id="IPR013790">
    <property type="entry name" value="Dwarfin"/>
</dbReference>
<dbReference type="InterPro" id="IPR003619">
    <property type="entry name" value="MAD_homology1_Dwarfin-type"/>
</dbReference>
<dbReference type="InterPro" id="IPR013019">
    <property type="entry name" value="MAD_homology_MH1"/>
</dbReference>
<dbReference type="InterPro" id="IPR017855">
    <property type="entry name" value="SMAD-like_dom_sf"/>
</dbReference>
<dbReference type="InterPro" id="IPR001132">
    <property type="entry name" value="SMAD_dom_Dwarfin-type"/>
</dbReference>
<dbReference type="InterPro" id="IPR008984">
    <property type="entry name" value="SMAD_FHA_dom_sf"/>
</dbReference>
<dbReference type="InterPro" id="IPR036578">
    <property type="entry name" value="SMAD_MH1_sf"/>
</dbReference>
<dbReference type="PANTHER" id="PTHR13703:SF28">
    <property type="entry name" value="MOTHERS AGAINST DECAPENTAPLEGIC HOMOLOG 6"/>
    <property type="match status" value="1"/>
</dbReference>
<dbReference type="PANTHER" id="PTHR13703">
    <property type="entry name" value="SMAD"/>
    <property type="match status" value="1"/>
</dbReference>
<dbReference type="Pfam" id="PF03165">
    <property type="entry name" value="MH1"/>
    <property type="match status" value="1"/>
</dbReference>
<dbReference type="Pfam" id="PF03166">
    <property type="entry name" value="MH2"/>
    <property type="match status" value="1"/>
</dbReference>
<dbReference type="SMART" id="SM00523">
    <property type="entry name" value="DWA"/>
    <property type="match status" value="1"/>
</dbReference>
<dbReference type="SMART" id="SM00524">
    <property type="entry name" value="DWB"/>
    <property type="match status" value="1"/>
</dbReference>
<dbReference type="SUPFAM" id="SSF56366">
    <property type="entry name" value="SMAD MH1 domain"/>
    <property type="match status" value="1"/>
</dbReference>
<dbReference type="SUPFAM" id="SSF49879">
    <property type="entry name" value="SMAD/FHA domain"/>
    <property type="match status" value="1"/>
</dbReference>
<dbReference type="PROSITE" id="PS51075">
    <property type="entry name" value="MH1"/>
    <property type="match status" value="1"/>
</dbReference>
<dbReference type="PROSITE" id="PS51076">
    <property type="entry name" value="MH2"/>
    <property type="match status" value="1"/>
</dbReference>
<organism>
    <name type="scientific">Gallus gallus</name>
    <name type="common">Chicken</name>
    <dbReference type="NCBI Taxonomy" id="9031"/>
    <lineage>
        <taxon>Eukaryota</taxon>
        <taxon>Metazoa</taxon>
        <taxon>Chordata</taxon>
        <taxon>Craniata</taxon>
        <taxon>Vertebrata</taxon>
        <taxon>Euteleostomi</taxon>
        <taxon>Archelosauria</taxon>
        <taxon>Archosauria</taxon>
        <taxon>Dinosauria</taxon>
        <taxon>Saurischia</taxon>
        <taxon>Theropoda</taxon>
        <taxon>Coelurosauria</taxon>
        <taxon>Aves</taxon>
        <taxon>Neognathae</taxon>
        <taxon>Galloanserae</taxon>
        <taxon>Galliformes</taxon>
        <taxon>Phasianidae</taxon>
        <taxon>Phasianinae</taxon>
        <taxon>Gallus</taxon>
    </lineage>
</organism>